<proteinExistence type="evidence at protein level"/>
<keyword id="KW-0045">Antibiotic biosynthesis</keyword>
<keyword id="KW-0274">FAD</keyword>
<keyword id="KW-0285">Flavoprotein</keyword>
<keyword id="KW-0560">Oxidoreductase</keyword>
<comment type="function">
    <text evidence="4">Glucosaminyl-6'-oxidase involved in the biosynthetic pathway of lividomycin by mediating FAD-dependent dehydrogenation of 6'''-hydroxyparomomycin to paromomycin.</text>
</comment>
<comment type="cofactor">
    <cofactor evidence="1">
        <name>FAD</name>
        <dbReference type="ChEBI" id="CHEBI:57692"/>
    </cofactor>
</comment>
<comment type="pathway">
    <text evidence="4">Antibiotic biosynthesis; lividomycin biosynthesis.</text>
</comment>
<comment type="similarity">
    <text evidence="5">Belongs to the GMC oxidoreductase family.</text>
</comment>
<reference key="1">
    <citation type="journal article" date="2011" name="J. Appl. Microbiol.">
        <title>The oxidoreductases LivQ and NeoQ are responsible for the different 6'-modifications in the aminoglycosides lividomycin and neomycin.</title>
        <authorList>
            <person name="Clausnitzer D."/>
            <person name="Piepersberg W."/>
            <person name="Wehmeier U.F."/>
        </authorList>
    </citation>
    <scope>NUCLEOTIDE SEQUENCE [GENOMIC DNA]</scope>
    <scope>FUNCTION</scope>
    <scope>PATHWAY</scope>
    <scope>CATALYTIC ACTIVITY</scope>
    <source>
        <strain>CBS 844.73</strain>
    </source>
</reference>
<protein>
    <recommendedName>
        <fullName>6'''-hydroxyparomomycin C oxidase</fullName>
        <ecNumber>1.1.3.-</ecNumber>
    </recommendedName>
    <alternativeName>
        <fullName>Lividomycin biosynthesis protein Q</fullName>
    </alternativeName>
</protein>
<dbReference type="EC" id="1.1.3.-"/>
<dbReference type="EMBL" id="AJ748832">
    <property type="protein sequence ID" value="CAG38701.1"/>
    <property type="molecule type" value="Genomic_DNA"/>
</dbReference>
<dbReference type="SMR" id="Q2MF66"/>
<dbReference type="KEGG" id="ag:CAG38701"/>
<dbReference type="BioCyc" id="MetaCyc:MONOMER-17269"/>
<dbReference type="BRENDA" id="1.1.3.44">
    <property type="organism ID" value="13009"/>
</dbReference>
<dbReference type="UniPathway" id="UPA00968"/>
<dbReference type="GO" id="GO:0050660">
    <property type="term" value="F:flavin adenine dinucleotide binding"/>
    <property type="evidence" value="ECO:0007669"/>
    <property type="project" value="InterPro"/>
</dbReference>
<dbReference type="GO" id="GO:0016899">
    <property type="term" value="F:oxidoreductase activity, acting on the CH-OH group of donors, oxygen as acceptor"/>
    <property type="evidence" value="ECO:0000314"/>
    <property type="project" value="UniProtKB"/>
</dbReference>
<dbReference type="GO" id="GO:0017000">
    <property type="term" value="P:antibiotic biosynthetic process"/>
    <property type="evidence" value="ECO:0000314"/>
    <property type="project" value="UniProtKB"/>
</dbReference>
<dbReference type="FunFam" id="3.50.50.60:FF:000567">
    <property type="entry name" value="Paromamine 6'-oxidase"/>
    <property type="match status" value="1"/>
</dbReference>
<dbReference type="FunFam" id="3.50.50.60:FF:000568">
    <property type="entry name" value="Paromamine 6'-oxidase"/>
    <property type="match status" value="1"/>
</dbReference>
<dbReference type="Gene3D" id="3.50.50.60">
    <property type="entry name" value="FAD/NAD(P)-binding domain"/>
    <property type="match status" value="3"/>
</dbReference>
<dbReference type="InterPro" id="IPR036188">
    <property type="entry name" value="FAD/NAD-bd_sf"/>
</dbReference>
<dbReference type="InterPro" id="IPR000172">
    <property type="entry name" value="GMC_OxRdtase_N"/>
</dbReference>
<dbReference type="InterPro" id="IPR007867">
    <property type="entry name" value="GMC_OxRtase_C"/>
</dbReference>
<dbReference type="InterPro" id="IPR051473">
    <property type="entry name" value="P2Ox-like"/>
</dbReference>
<dbReference type="PANTHER" id="PTHR42784">
    <property type="entry name" value="PYRANOSE 2-OXIDASE"/>
    <property type="match status" value="1"/>
</dbReference>
<dbReference type="PANTHER" id="PTHR42784:SF1">
    <property type="entry name" value="PYRANOSE 2-OXIDASE"/>
    <property type="match status" value="1"/>
</dbReference>
<dbReference type="Pfam" id="PF05199">
    <property type="entry name" value="GMC_oxred_C"/>
    <property type="match status" value="1"/>
</dbReference>
<dbReference type="Pfam" id="PF00732">
    <property type="entry name" value="GMC_oxred_N"/>
    <property type="match status" value="1"/>
</dbReference>
<dbReference type="Pfam" id="PF13450">
    <property type="entry name" value="NAD_binding_8"/>
    <property type="match status" value="1"/>
</dbReference>
<dbReference type="SUPFAM" id="SSF51905">
    <property type="entry name" value="FAD/NAD(P)-binding domain"/>
    <property type="match status" value="1"/>
</dbReference>
<evidence type="ECO:0000250" key="1"/>
<evidence type="ECO:0000250" key="2">
    <source>
        <dbReference type="UniProtKB" id="E4QP00"/>
    </source>
</evidence>
<evidence type="ECO:0000256" key="3">
    <source>
        <dbReference type="SAM" id="MobiDB-lite"/>
    </source>
</evidence>
<evidence type="ECO:0000269" key="4">
    <source>
    </source>
</evidence>
<evidence type="ECO:0000305" key="5"/>
<name>LIVQ_STRLV</name>
<sequence>MERLRGPSPLENTTARHPAPLGPAHRDGLEPGTADRVWDVCVIGSGASGAVAADRLVRQGLDVLMVEEGFRLAPHVGLDEAESLSRQALARDGEGNWTDEGWPWTTSNLGGGTVYYGGASFRYRPFDFDPGELVHTDGVDVRWPYTLADLVPYYEVLERRLGVCGGDAPGIHRGSRHSRGPAHQPSPAARVLRAAGESLGYRPFPTPLAINRDPHGGRAACARDSLCVSHLCPTGAKGDVVAVFLAPLAAHPNFALRTGVRALRLEQDRSGEVAAVRCLDRQTGQAHRVRARVYVVACNAIQSAALLLRSRTPYSPDGVGNHSHLVGRGLCMKLSEYLSGTVDADPAVLADPYTNTGPFSTVAFLDHYLDPDCPGGFGGLIYESKRDQRHKLVHDALELRIETILADHPNLDNRVGLSTHLDEDGMPAVVIDYTPDPRDLDRLRYMTGRCERLLRTAGARGIRSRSTGFAQGSSHLHGTCRAGHDPARSVVDAWGRVHSADNVYIVDGSFMPYPGGLNPTLTIQAHALRTSRAIASHLAADRAAHV</sequence>
<organism>
    <name type="scientific">Streptomyces lividus</name>
    <dbReference type="NCBI Taxonomy" id="282216"/>
    <lineage>
        <taxon>Bacteria</taxon>
        <taxon>Bacillati</taxon>
        <taxon>Actinomycetota</taxon>
        <taxon>Actinomycetes</taxon>
        <taxon>Kitasatosporales</taxon>
        <taxon>Streptomycetaceae</taxon>
        <taxon>Streptomyces</taxon>
    </lineage>
</organism>
<feature type="chain" id="PRO_0000421738" description="6'''-hydroxyparomomycin C oxidase">
    <location>
        <begin position="1"/>
        <end position="546"/>
    </location>
</feature>
<feature type="region of interest" description="Disordered" evidence="3">
    <location>
        <begin position="1"/>
        <end position="30"/>
    </location>
</feature>
<feature type="active site" description="Proton acceptor" evidence="2">
    <location>
        <position position="475"/>
    </location>
</feature>
<accession>Q2MF66</accession>
<gene>
    <name type="primary">livQ</name>
</gene>